<evidence type="ECO:0000250" key="1"/>
<evidence type="ECO:0000256" key="2">
    <source>
        <dbReference type="SAM" id="MobiDB-lite"/>
    </source>
</evidence>
<evidence type="ECO:0000305" key="3"/>
<protein>
    <recommendedName>
        <fullName>Protein STU1</fullName>
    </recommendedName>
</protein>
<proteinExistence type="inferred from homology"/>
<reference key="1">
    <citation type="journal article" date="2009" name="Genome Res.">
        <title>Comparative genomic analyses of the human fungal pathogens Coccidioides and their relatives.</title>
        <authorList>
            <person name="Sharpton T.J."/>
            <person name="Stajich J.E."/>
            <person name="Rounsley S.D."/>
            <person name="Gardner M.J."/>
            <person name="Wortman J.R."/>
            <person name="Jordar V.S."/>
            <person name="Maiti R."/>
            <person name="Kodira C.D."/>
            <person name="Neafsey D.E."/>
            <person name="Zeng Q."/>
            <person name="Hung C.-Y."/>
            <person name="McMahan C."/>
            <person name="Muszewska A."/>
            <person name="Grynberg M."/>
            <person name="Mandel M.A."/>
            <person name="Kellner E.M."/>
            <person name="Barker B.M."/>
            <person name="Galgiani J.N."/>
            <person name="Orbach M.J."/>
            <person name="Kirkland T.N."/>
            <person name="Cole G.T."/>
            <person name="Henn M.R."/>
            <person name="Birren B.W."/>
            <person name="Taylor J.W."/>
        </authorList>
    </citation>
    <scope>NUCLEOTIDE SEQUENCE [LARGE SCALE GENOMIC DNA]</scope>
    <source>
        <strain>RS</strain>
    </source>
</reference>
<reference key="2">
    <citation type="journal article" date="2010" name="Genome Res.">
        <title>Population genomic sequencing of Coccidioides fungi reveals recent hybridization and transposon control.</title>
        <authorList>
            <person name="Neafsey D.E."/>
            <person name="Barker B.M."/>
            <person name="Sharpton T.J."/>
            <person name="Stajich J.E."/>
            <person name="Park D.J."/>
            <person name="Whiston E."/>
            <person name="Hung C.-Y."/>
            <person name="McMahan C."/>
            <person name="White J."/>
            <person name="Sykes S."/>
            <person name="Heiman D."/>
            <person name="Young S."/>
            <person name="Zeng Q."/>
            <person name="Abouelleil A."/>
            <person name="Aftuck L."/>
            <person name="Bessette D."/>
            <person name="Brown A."/>
            <person name="FitzGerald M."/>
            <person name="Lui A."/>
            <person name="Macdonald J.P."/>
            <person name="Priest M."/>
            <person name="Orbach M.J."/>
            <person name="Galgiani J.N."/>
            <person name="Kirkland T.N."/>
            <person name="Cole G.T."/>
            <person name="Birren B.W."/>
            <person name="Henn M.R."/>
            <person name="Taylor J.W."/>
            <person name="Rounsley S.D."/>
        </authorList>
    </citation>
    <scope>GENOME REANNOTATION</scope>
    <source>
        <strain>RS</strain>
    </source>
</reference>
<sequence>MDARATELLATLRNGNVSVDVKTTSLAKLKSEIKQKHVPDAAISPLFESFRLAIASQHYSLSSAGFSALGHLLKRLTLQEQHEAIALQGRATYQLLLERLGDHKERIRSQAAQAFTDFWPAASADVEHHVLGAALIGKNARAKETSMVWLAKMTREYGLLFRIYVPALVTCLEDADGVVRDTAKSTVIELFQSAPPRAISDLKKQLIQNNVRKSIATSILSSLGANIVADSETSSSFQSQSRSDITRPATSFSHRREEVPRSQSVLSMRSHSNADVHNIPKIDAAFKSQSKPTRSGHSSKDPTLSHTASSESLPAPRQDTTDGEGVEPLYINSHREFDDTIREMLPHFEGKESEQNWILREKSIMTLRRLTKGNAPHDYQQYYLAGIKSVLDGILKTANSLRTTLSAAGCYLLQDIARTCGPAIDPMVEILLQSLIKLSAALKKITAQNGNVTVDVIIGNVSYTARILQHIWGACQDKNVQPRQFATGWIKTIIIRQGKHKGSIEHSGGLDLIEKCIKKGLGDPNPGVREGMRGTFWAFYSVWPERADVIMSALEPKSKNLLERDPNNTHRGVASQSFDGSRGSQPHSTKSSLKEAINAQKKARLAASSNVPSRPESAQSSFPDPKSGRPAPRRPTGTSTIRVPTGEKLSQSASLSSAPMRPASRPRRPELVRPATADPYSSRRSAAPTAQSKASSPSDSPQKSKSKLMTTPRSRNPLARPKSRMDNAANVTNDKQRADPAATLAPKMRRRGPSEPDVVSAAARARIAILSPSRTEGDFSVASSQVKIDQKAEEAFQGTPTRGIENGTPLPASPLRSPLKGAFSTPTRNRKSSDGAPPSRIPISPSYSSRRSSEEPMLPRTPLDSRRSRGESDEAASQIPAPVDQSPIIDAINSQSPGILKVYEDPQSPHSKHSIVLGDTVPKTPGSQAKVMPLEELPLNESTTVPNRKHNQLPEHTPLLQPSPILTPSSENSHRRWKKVEGSERRRSLSPRSKDPVKAQDMITRGLARIRTGALDVHGYRKFQNLIKYHESISKDDTKYEDILMALLEALEKPDGDKGAPSGRSLDLKTQVLVTIRLMLVINREAFAAFYPRVMTAIITARKQYELTNHIVSGLEETAEDIVSACNPPQVIDAILDLLETEERSFESYRMVAMGSYILSGLLRRLNNQKLYLSQAELERLGKFANENLRSTQPDVRRAIIDFCPELYDMVQSEDAFWSMVNSSVEDFRPLLTYYIMRRPEKIG</sequence>
<gene>
    <name type="primary">STU1</name>
    <name type="ORF">CIMG_06848</name>
</gene>
<accession>Q1DS65</accession>
<accession>J3K9S6</accession>
<name>STU1_COCIM</name>
<keyword id="KW-0131">Cell cycle</keyword>
<keyword id="KW-0132">Cell division</keyword>
<keyword id="KW-0963">Cytoplasm</keyword>
<keyword id="KW-0206">Cytoskeleton</keyword>
<keyword id="KW-0493">Microtubule</keyword>
<keyword id="KW-0498">Mitosis</keyword>
<keyword id="KW-0539">Nucleus</keyword>
<keyword id="KW-1185">Reference proteome</keyword>
<keyword id="KW-0677">Repeat</keyword>
<feature type="chain" id="PRO_0000272286" description="Protein STU1">
    <location>
        <begin position="1"/>
        <end position="1244"/>
    </location>
</feature>
<feature type="repeat" description="HEAT 1">
    <location>
        <begin position="87"/>
        <end position="124"/>
    </location>
</feature>
<feature type="repeat" description="HEAT 2">
    <location>
        <begin position="159"/>
        <end position="196"/>
    </location>
</feature>
<feature type="repeat" description="HEAT 3">
    <location>
        <begin position="1038"/>
        <end position="1075"/>
    </location>
</feature>
<feature type="repeat" description="HEAT 4">
    <location>
        <begin position="1126"/>
        <end position="1163"/>
    </location>
</feature>
<feature type="region of interest" description="Disordered" evidence="2">
    <location>
        <begin position="232"/>
        <end position="326"/>
    </location>
</feature>
<feature type="region of interest" description="Disordered" evidence="2">
    <location>
        <begin position="561"/>
        <end position="758"/>
    </location>
</feature>
<feature type="region of interest" description="Disordered" evidence="2">
    <location>
        <begin position="795"/>
        <end position="998"/>
    </location>
</feature>
<feature type="compositionally biased region" description="Low complexity" evidence="2">
    <location>
        <begin position="232"/>
        <end position="243"/>
    </location>
</feature>
<feature type="compositionally biased region" description="Polar residues" evidence="2">
    <location>
        <begin position="261"/>
        <end position="271"/>
    </location>
</feature>
<feature type="compositionally biased region" description="Polar residues" evidence="2">
    <location>
        <begin position="287"/>
        <end position="312"/>
    </location>
</feature>
<feature type="compositionally biased region" description="Polar residues" evidence="2">
    <location>
        <begin position="574"/>
        <end position="591"/>
    </location>
</feature>
<feature type="compositionally biased region" description="Polar residues" evidence="2">
    <location>
        <begin position="607"/>
        <end position="622"/>
    </location>
</feature>
<feature type="compositionally biased region" description="Low complexity" evidence="2">
    <location>
        <begin position="652"/>
        <end position="663"/>
    </location>
</feature>
<feature type="compositionally biased region" description="Low complexity" evidence="2">
    <location>
        <begin position="690"/>
        <end position="703"/>
    </location>
</feature>
<feature type="compositionally biased region" description="Low complexity" evidence="2">
    <location>
        <begin position="837"/>
        <end position="850"/>
    </location>
</feature>
<feature type="compositionally biased region" description="Basic and acidic residues" evidence="2">
    <location>
        <begin position="863"/>
        <end position="872"/>
    </location>
</feature>
<feature type="compositionally biased region" description="Basic and acidic residues" evidence="2">
    <location>
        <begin position="979"/>
        <end position="998"/>
    </location>
</feature>
<comment type="function">
    <text evidence="1">Microtubule binding protein that promotes the stabilization of dynamic microtubules. Required for mitotic spindle formation (By similarity).</text>
</comment>
<comment type="subunit">
    <text evidence="1">Interacts with microtubules.</text>
</comment>
<comment type="subcellular location">
    <subcellularLocation>
        <location evidence="1">Cytoplasm</location>
        <location evidence="1">Cytoskeleton</location>
    </subcellularLocation>
    <subcellularLocation>
        <location evidence="1">Nucleus</location>
    </subcellularLocation>
    <subcellularLocation>
        <location evidence="1">Cytoplasm</location>
        <location evidence="1">Cytoskeleton</location>
        <location evidence="1">Spindle</location>
    </subcellularLocation>
</comment>
<comment type="similarity">
    <text evidence="3">Belongs to the CLASP family.</text>
</comment>
<dbReference type="EMBL" id="GG704912">
    <property type="protein sequence ID" value="EAS31369.3"/>
    <property type="molecule type" value="Genomic_DNA"/>
</dbReference>
<dbReference type="RefSeq" id="XP_001242952.2">
    <property type="nucleotide sequence ID" value="XM_001242951.2"/>
</dbReference>
<dbReference type="STRING" id="246410.Q1DS65"/>
<dbReference type="GeneID" id="4562036"/>
<dbReference type="KEGG" id="cim:CIMG_06848"/>
<dbReference type="VEuPathDB" id="FungiDB:CIMG_06848"/>
<dbReference type="InParanoid" id="Q1DS65"/>
<dbReference type="OMA" id="GNAPHDF"/>
<dbReference type="OrthoDB" id="46159at2759"/>
<dbReference type="Proteomes" id="UP000001261">
    <property type="component" value="Unassembled WGS sequence"/>
</dbReference>
<dbReference type="GO" id="GO:0005881">
    <property type="term" value="C:cytoplasmic microtubule"/>
    <property type="evidence" value="ECO:0007669"/>
    <property type="project" value="TreeGrafter"/>
</dbReference>
<dbReference type="GO" id="GO:0005815">
    <property type="term" value="C:microtubule organizing center"/>
    <property type="evidence" value="ECO:0007669"/>
    <property type="project" value="TreeGrafter"/>
</dbReference>
<dbReference type="GO" id="GO:1990023">
    <property type="term" value="C:mitotic spindle midzone"/>
    <property type="evidence" value="ECO:0007669"/>
    <property type="project" value="TreeGrafter"/>
</dbReference>
<dbReference type="GO" id="GO:0005634">
    <property type="term" value="C:nucleus"/>
    <property type="evidence" value="ECO:0007669"/>
    <property type="project" value="UniProtKB-SubCell"/>
</dbReference>
<dbReference type="GO" id="GO:0005876">
    <property type="term" value="C:spindle microtubule"/>
    <property type="evidence" value="ECO:0007669"/>
    <property type="project" value="TreeGrafter"/>
</dbReference>
<dbReference type="GO" id="GO:0008017">
    <property type="term" value="F:microtubule binding"/>
    <property type="evidence" value="ECO:0007669"/>
    <property type="project" value="TreeGrafter"/>
</dbReference>
<dbReference type="GO" id="GO:0060172">
    <property type="term" value="P:astral microtubule depolymerization"/>
    <property type="evidence" value="ECO:0007669"/>
    <property type="project" value="TreeGrafter"/>
</dbReference>
<dbReference type="GO" id="GO:0051301">
    <property type="term" value="P:cell division"/>
    <property type="evidence" value="ECO:0007669"/>
    <property type="project" value="UniProtKB-KW"/>
</dbReference>
<dbReference type="GO" id="GO:0090307">
    <property type="term" value="P:mitotic spindle assembly"/>
    <property type="evidence" value="ECO:0007669"/>
    <property type="project" value="TreeGrafter"/>
</dbReference>
<dbReference type="Gene3D" id="1.25.10.10">
    <property type="entry name" value="Leucine-rich Repeat Variant"/>
    <property type="match status" value="3"/>
</dbReference>
<dbReference type="InterPro" id="IPR011989">
    <property type="entry name" value="ARM-like"/>
</dbReference>
<dbReference type="InterPro" id="IPR016024">
    <property type="entry name" value="ARM-type_fold"/>
</dbReference>
<dbReference type="InterPro" id="IPR024395">
    <property type="entry name" value="CLASP_N_dom"/>
</dbReference>
<dbReference type="InterPro" id="IPR034085">
    <property type="entry name" value="TOG"/>
</dbReference>
<dbReference type="PANTHER" id="PTHR21567">
    <property type="entry name" value="CLASP"/>
    <property type="match status" value="1"/>
</dbReference>
<dbReference type="PANTHER" id="PTHR21567:SF9">
    <property type="entry name" value="CLIP-ASSOCIATING PROTEIN"/>
    <property type="match status" value="1"/>
</dbReference>
<dbReference type="Pfam" id="PF12348">
    <property type="entry name" value="CLASP_N"/>
    <property type="match status" value="2"/>
</dbReference>
<dbReference type="SMART" id="SM01349">
    <property type="entry name" value="TOG"/>
    <property type="match status" value="2"/>
</dbReference>
<dbReference type="SUPFAM" id="SSF48371">
    <property type="entry name" value="ARM repeat"/>
    <property type="match status" value="1"/>
</dbReference>
<organism>
    <name type="scientific">Coccidioides immitis (strain RS)</name>
    <name type="common">Valley fever fungus</name>
    <dbReference type="NCBI Taxonomy" id="246410"/>
    <lineage>
        <taxon>Eukaryota</taxon>
        <taxon>Fungi</taxon>
        <taxon>Dikarya</taxon>
        <taxon>Ascomycota</taxon>
        <taxon>Pezizomycotina</taxon>
        <taxon>Eurotiomycetes</taxon>
        <taxon>Eurotiomycetidae</taxon>
        <taxon>Onygenales</taxon>
        <taxon>Onygenaceae</taxon>
        <taxon>Coccidioides</taxon>
    </lineage>
</organism>